<protein>
    <recommendedName>
        <fullName>Netrin receptor UNC5B</fullName>
    </recommendedName>
    <alternativeName>
        <fullName>Protein unc-5 homolog 2</fullName>
    </alternativeName>
    <alternativeName>
        <fullName>Protein unc-5 homolog B</fullName>
    </alternativeName>
</protein>
<accession>O08722</accession>
<evidence type="ECO:0000250" key="1"/>
<evidence type="ECO:0000250" key="2">
    <source>
        <dbReference type="UniProtKB" id="O08747"/>
    </source>
</evidence>
<evidence type="ECO:0000250" key="3">
    <source>
        <dbReference type="UniProtKB" id="Q6ZN44"/>
    </source>
</evidence>
<evidence type="ECO:0000250" key="4">
    <source>
        <dbReference type="UniProtKB" id="Q8IZJ1"/>
    </source>
</evidence>
<evidence type="ECO:0000250" key="5">
    <source>
        <dbReference type="UniProtKB" id="Q8K1S3"/>
    </source>
</evidence>
<evidence type="ECO:0000255" key="6"/>
<evidence type="ECO:0000255" key="7">
    <source>
        <dbReference type="PROSITE-ProRule" id="PRU00064"/>
    </source>
</evidence>
<evidence type="ECO:0000255" key="8">
    <source>
        <dbReference type="PROSITE-ProRule" id="PRU00210"/>
    </source>
</evidence>
<evidence type="ECO:0000255" key="9">
    <source>
        <dbReference type="PROSITE-ProRule" id="PRU00485"/>
    </source>
</evidence>
<evidence type="ECO:0000269" key="10">
    <source>
    </source>
</evidence>
<evidence type="ECO:0000269" key="11">
    <source>
    </source>
</evidence>
<evidence type="ECO:0000269" key="12">
    <source>
    </source>
</evidence>
<evidence type="ECO:0000269" key="13">
    <source>
    </source>
</evidence>
<evidence type="ECO:0000269" key="14">
    <source>
    </source>
</evidence>
<evidence type="ECO:0000305" key="15"/>
<evidence type="ECO:0000305" key="16">
    <source>
    </source>
</evidence>
<evidence type="ECO:0000305" key="17">
    <source>
    </source>
</evidence>
<evidence type="ECO:0007829" key="18">
    <source>
        <dbReference type="PDB" id="3G5B"/>
    </source>
</evidence>
<reference key="1">
    <citation type="journal article" date="1997" name="Nature">
        <title>Vertebrate homologues of C. elegans UNC-5 are candidate netrin receptors.</title>
        <authorList>
            <person name="Leonardo E.D."/>
            <person name="Hinck L."/>
            <person name="Masu M."/>
            <person name="Keino-Masu K."/>
            <person name="Ackerman S.L."/>
            <person name="Tessier-Lavigne M."/>
        </authorList>
    </citation>
    <scope>NUCLEOTIDE SEQUENCE [MRNA]</scope>
    <scope>FUNCTION</scope>
    <scope>SUBCELLULAR LOCATION</scope>
    <scope>TISSUE SPECIFICITY</scope>
</reference>
<reference key="2">
    <citation type="journal article" date="1999" name="Cell">
        <title>A ligand-gated association between cytoplasmic domains of UNC5 and DCC family receptors converts netrin-induced growth cone attraction to repulsion.</title>
        <authorList>
            <person name="Hong K."/>
            <person name="Hinck L."/>
            <person name="Nishiyama M."/>
            <person name="Poo M.-M."/>
            <person name="Tessier-Lavigne M."/>
            <person name="Stein E."/>
        </authorList>
    </citation>
    <scope>FUNCTION</scope>
    <scope>INTERACTION WITH DCC</scope>
</reference>
<reference key="3">
    <citation type="journal article" date="2001" name="EMBO J.">
        <title>Netrin-1 acts as a survival factor via its receptors UNC5H and DCC.</title>
        <authorList>
            <person name="Llambi F."/>
            <person name="Causeret F."/>
            <person name="Bloch-Gallego E."/>
            <person name="Mehlen P."/>
        </authorList>
    </citation>
    <scope>FUNCTION</scope>
    <scope>MUTAGENESIS OF ASP-412</scope>
    <scope>PROTEOLYTIC CLEAVAGE</scope>
</reference>
<reference key="4">
    <citation type="journal article" date="2005" name="EMBO J.">
        <title>The dependence receptor UNC5H2 mediates apoptosis through DAP-kinase.</title>
        <authorList>
            <person name="Llambi F."/>
            <person name="Lourenco F.C."/>
            <person name="Gozuacik D."/>
            <person name="Guix C."/>
            <person name="Pays L."/>
            <person name="Del Rio G."/>
            <person name="Kimchi A."/>
            <person name="Mehlen P."/>
        </authorList>
    </citation>
    <scope>FUNCTION</scope>
    <scope>INTERACTION WITH DAPK1</scope>
</reference>
<reference key="5">
    <citation type="journal article" date="2008" name="Exp. Cell Res.">
        <title>Lipid raft localization and palmitoylation: identification of two requirements for cell death induction by the tumor suppressors UNC5H.</title>
        <authorList>
            <person name="Maisse C."/>
            <person name="Rossin A."/>
            <person name="Cahuzac N."/>
            <person name="Paradisi A."/>
            <person name="Klein C."/>
            <person name="Haillot M.L."/>
            <person name="Herincs Z."/>
            <person name="Mehlen P."/>
            <person name="Hueber A.O."/>
        </authorList>
    </citation>
    <scope>FUNCTION</scope>
    <scope>PALMITOYLATION AT CYS-403</scope>
    <scope>SUBCELLULAR LOCATION</scope>
    <scope>INTERACTION WITH DAPK1</scope>
</reference>
<reference key="6">
    <citation type="journal article" date="2009" name="Mol. Cell">
        <title>Autoinhibition of UNC5b revealed by the cytoplasmic domain structure of the receptor.</title>
        <authorList>
            <person name="Wang R."/>
            <person name="Wei Z."/>
            <person name="Jin H."/>
            <person name="Wu H."/>
            <person name="Yu C."/>
            <person name="Wen W."/>
            <person name="Chan L.N."/>
            <person name="Wen Z."/>
            <person name="Zhang M."/>
        </authorList>
    </citation>
    <scope>X-RAY CRYSTALLOGRAPHY (2.0 ANGSTROMS) OF 543-945</scope>
    <scope>DOMAIN ZU5</scope>
    <scope>DOMAIN UPA</scope>
</reference>
<organism>
    <name type="scientific">Rattus norvegicus</name>
    <name type="common">Rat</name>
    <dbReference type="NCBI Taxonomy" id="10116"/>
    <lineage>
        <taxon>Eukaryota</taxon>
        <taxon>Metazoa</taxon>
        <taxon>Chordata</taxon>
        <taxon>Craniata</taxon>
        <taxon>Vertebrata</taxon>
        <taxon>Euteleostomi</taxon>
        <taxon>Mammalia</taxon>
        <taxon>Eutheria</taxon>
        <taxon>Euarchontoglires</taxon>
        <taxon>Glires</taxon>
        <taxon>Rodentia</taxon>
        <taxon>Myomorpha</taxon>
        <taxon>Muroidea</taxon>
        <taxon>Muridae</taxon>
        <taxon>Murinae</taxon>
        <taxon>Rattus</taxon>
    </lineage>
</organism>
<feature type="signal peptide" evidence="6">
    <location>
        <begin position="1"/>
        <end position="26"/>
    </location>
</feature>
<feature type="chain" id="PRO_0000036073" description="Netrin receptor UNC5B">
    <location>
        <begin position="27"/>
        <end position="945"/>
    </location>
</feature>
<feature type="topological domain" description="Extracellular" evidence="6">
    <location>
        <begin position="27"/>
        <end position="377"/>
    </location>
</feature>
<feature type="transmembrane region" description="Helical" evidence="6">
    <location>
        <begin position="378"/>
        <end position="398"/>
    </location>
</feature>
<feature type="topological domain" description="Cytoplasmic" evidence="6">
    <location>
        <begin position="399"/>
        <end position="945"/>
    </location>
</feature>
<feature type="domain" description="Ig-like">
    <location>
        <begin position="48"/>
        <end position="145"/>
    </location>
</feature>
<feature type="domain" description="Ig-like C2-type">
    <location>
        <begin position="153"/>
        <end position="242"/>
    </location>
</feature>
<feature type="domain" description="TSP type-1 1" evidence="8">
    <location>
        <begin position="246"/>
        <end position="300"/>
    </location>
</feature>
<feature type="domain" description="TSP type-1 2" evidence="8">
    <location>
        <begin position="302"/>
        <end position="354"/>
    </location>
</feature>
<feature type="domain" description="ZU5" evidence="9">
    <location>
        <begin position="543"/>
        <end position="686"/>
    </location>
</feature>
<feature type="domain" description="Death" evidence="7">
    <location>
        <begin position="865"/>
        <end position="943"/>
    </location>
</feature>
<feature type="region of interest" description="UPA domain">
    <location>
        <begin position="689"/>
        <end position="838"/>
    </location>
</feature>
<feature type="region of interest" description="Interaction with DCC" evidence="10">
    <location>
        <begin position="707"/>
        <end position="725"/>
    </location>
</feature>
<feature type="site" description="Cleavage; by caspase-3" evidence="16">
    <location>
        <begin position="412"/>
        <end position="413"/>
    </location>
</feature>
<feature type="modified residue" description="Phosphotyrosine" evidence="2">
    <location>
        <position position="581"/>
    </location>
</feature>
<feature type="lipid moiety-binding region" description="S-palmitoyl cysteine" evidence="13">
    <location>
        <position position="403"/>
    </location>
</feature>
<feature type="glycosylation site" description="N-linked (GlcNAc...) asparagine" evidence="6">
    <location>
        <position position="222"/>
    </location>
</feature>
<feature type="glycosylation site" description="N-linked (GlcNAc...) asparagine" evidence="6">
    <location>
        <position position="347"/>
    </location>
</feature>
<feature type="disulfide bond" evidence="3">
    <location>
        <begin position="69"/>
        <end position="130"/>
    </location>
</feature>
<feature type="disulfide bond" evidence="3">
    <location>
        <begin position="81"/>
        <end position="128"/>
    </location>
</feature>
<feature type="disulfide bond" evidence="3">
    <location>
        <begin position="174"/>
        <end position="225"/>
    </location>
</feature>
<feature type="disulfide bond" evidence="1">
    <location>
        <begin position="258"/>
        <end position="295"/>
    </location>
</feature>
<feature type="disulfide bond" evidence="1">
    <location>
        <begin position="262"/>
        <end position="299"/>
    </location>
</feature>
<feature type="disulfide bond" evidence="1">
    <location>
        <begin position="273"/>
        <end position="285"/>
    </location>
</feature>
<feature type="disulfide bond" evidence="3">
    <location>
        <begin position="314"/>
        <end position="348"/>
    </location>
</feature>
<feature type="disulfide bond" evidence="3">
    <location>
        <begin position="318"/>
        <end position="353"/>
    </location>
</feature>
<feature type="disulfide bond" evidence="3">
    <location>
        <begin position="326"/>
        <end position="338"/>
    </location>
</feature>
<feature type="mutagenesis site" description="Abolishes palmitoylation. Impairs interaction with DAPK1. No effect on location on lipid rafts." evidence="13">
    <original>C</original>
    <variation>V</variation>
    <location>
        <position position="403"/>
    </location>
</feature>
<feature type="mutagenesis site" description="Abolishes cleavage by caspase-3 and subsequent induction of apoptosis." evidence="11">
    <original>D</original>
    <variation>N</variation>
    <location>
        <position position="412"/>
    </location>
</feature>
<feature type="strand" evidence="18">
    <location>
        <begin position="544"/>
        <end position="549"/>
    </location>
</feature>
<feature type="strand" evidence="18">
    <location>
        <begin position="554"/>
        <end position="558"/>
    </location>
</feature>
<feature type="turn" evidence="18">
    <location>
        <begin position="559"/>
        <end position="562"/>
    </location>
</feature>
<feature type="strand" evidence="18">
    <location>
        <begin position="563"/>
        <end position="567"/>
    </location>
</feature>
<feature type="strand" evidence="18">
    <location>
        <begin position="578"/>
        <end position="584"/>
    </location>
</feature>
<feature type="helix" evidence="18">
    <location>
        <begin position="587"/>
        <end position="593"/>
    </location>
</feature>
<feature type="strand" evidence="18">
    <location>
        <begin position="598"/>
        <end position="600"/>
    </location>
</feature>
<feature type="strand" evidence="18">
    <location>
        <begin position="605"/>
        <end position="608"/>
    </location>
</feature>
<feature type="strand" evidence="18">
    <location>
        <begin position="618"/>
        <end position="623"/>
    </location>
</feature>
<feature type="strand" evidence="18">
    <location>
        <begin position="629"/>
        <end position="631"/>
    </location>
</feature>
<feature type="strand" evidence="18">
    <location>
        <begin position="634"/>
        <end position="642"/>
    </location>
</feature>
<feature type="strand" evidence="18">
    <location>
        <begin position="646"/>
        <end position="651"/>
    </location>
</feature>
<feature type="strand" evidence="18">
    <location>
        <begin position="660"/>
        <end position="665"/>
    </location>
</feature>
<feature type="strand" evidence="18">
    <location>
        <begin position="667"/>
        <end position="676"/>
    </location>
</feature>
<feature type="strand" evidence="18">
    <location>
        <begin position="678"/>
        <end position="685"/>
    </location>
</feature>
<feature type="strand" evidence="18">
    <location>
        <begin position="692"/>
        <end position="703"/>
    </location>
</feature>
<feature type="strand" evidence="18">
    <location>
        <begin position="707"/>
        <end position="720"/>
    </location>
</feature>
<feature type="helix" evidence="18">
    <location>
        <begin position="721"/>
        <end position="734"/>
    </location>
</feature>
<feature type="strand" evidence="18">
    <location>
        <begin position="736"/>
        <end position="738"/>
    </location>
</feature>
<feature type="strand" evidence="18">
    <location>
        <begin position="743"/>
        <end position="751"/>
    </location>
</feature>
<feature type="strand" evidence="18">
    <location>
        <begin position="754"/>
        <end position="759"/>
    </location>
</feature>
<feature type="turn" evidence="18">
    <location>
        <begin position="763"/>
        <end position="765"/>
    </location>
</feature>
<feature type="strand" evidence="18">
    <location>
        <begin position="766"/>
        <end position="768"/>
    </location>
</feature>
<feature type="strand" evidence="18">
    <location>
        <begin position="771"/>
        <end position="773"/>
    </location>
</feature>
<feature type="strand" evidence="18">
    <location>
        <begin position="775"/>
        <end position="777"/>
    </location>
</feature>
<feature type="helix" evidence="18">
    <location>
        <begin position="779"/>
        <end position="783"/>
    </location>
</feature>
<feature type="strand" evidence="18">
    <location>
        <begin position="791"/>
        <end position="800"/>
    </location>
</feature>
<feature type="strand" evidence="18">
    <location>
        <begin position="805"/>
        <end position="814"/>
    </location>
</feature>
<feature type="strand" evidence="18">
    <location>
        <begin position="819"/>
        <end position="827"/>
    </location>
</feature>
<feature type="strand" evidence="18">
    <location>
        <begin position="849"/>
        <end position="851"/>
    </location>
</feature>
<feature type="turn" evidence="18">
    <location>
        <begin position="852"/>
        <end position="855"/>
    </location>
</feature>
<feature type="helix" evidence="18">
    <location>
        <begin position="860"/>
        <end position="870"/>
    </location>
</feature>
<feature type="helix" evidence="18">
    <location>
        <begin position="880"/>
        <end position="886"/>
    </location>
</feature>
<feature type="turn" evidence="18">
    <location>
        <begin position="891"/>
        <end position="893"/>
    </location>
</feature>
<feature type="helix" evidence="18">
    <location>
        <begin position="894"/>
        <end position="897"/>
    </location>
</feature>
<feature type="helix" evidence="18">
    <location>
        <begin position="902"/>
        <end position="914"/>
    </location>
</feature>
<feature type="helix" evidence="18">
    <location>
        <begin position="920"/>
        <end position="929"/>
    </location>
</feature>
<feature type="helix" evidence="18">
    <location>
        <begin position="934"/>
        <end position="940"/>
    </location>
</feature>
<name>UNC5B_RAT</name>
<gene>
    <name type="primary">Unc5b</name>
    <name type="synonym">Unc5h2</name>
</gene>
<keyword id="KW-0002">3D-structure</keyword>
<keyword id="KW-0053">Apoptosis</keyword>
<keyword id="KW-1003">Cell membrane</keyword>
<keyword id="KW-0217">Developmental protein</keyword>
<keyword id="KW-1015">Disulfide bond</keyword>
<keyword id="KW-0325">Glycoprotein</keyword>
<keyword id="KW-0393">Immunoglobulin domain</keyword>
<keyword id="KW-0449">Lipoprotein</keyword>
<keyword id="KW-0472">Membrane</keyword>
<keyword id="KW-0564">Palmitate</keyword>
<keyword id="KW-0597">Phosphoprotein</keyword>
<keyword id="KW-0675">Receptor</keyword>
<keyword id="KW-1185">Reference proteome</keyword>
<keyword id="KW-0677">Repeat</keyword>
<keyword id="KW-0732">Signal</keyword>
<keyword id="KW-0812">Transmembrane</keyword>
<keyword id="KW-1133">Transmembrane helix</keyword>
<proteinExistence type="evidence at protein level"/>
<comment type="function">
    <text evidence="5 10 11 12 13 17">Receptor for netrin required for axon guidance. Mediates axon repulsion of neuronal growth cones in the developing nervous system upon ligand binding. Axon repulsion in growth cones may be caused by its association with DCC that may trigger signaling for repulsion (PubMed:10399920, PubMed:9126742). Functions as a netrin receptor that negatively regulates vascular branching during angiogenesis. Mediates retraction of tip cell filopodia on endothelial growth cones in response to netrin (By similarity). It also acts as a dependence receptor required for apoptosis induction when not associated with netrin ligand (PubMed:11387206). Mediates apoptosis by activating DAPK1 (PubMed:18582460). In the absence of NTN1, activates DAPK1 by reducing its autoinhibitory phosphorylation at Ser-308 thereby increasing its catalytic activity (PubMed:15729359).</text>
</comment>
<comment type="subunit">
    <text evidence="4 10 12 13">Interacts with the cytoplasmic part of DCC (PubMed:10399920). Interacts with GNAI2 via its cytoplasmic part (By similarity). Interacts (via death domain) with DAPK1 (via death domain) (PubMed:15729359, PubMed:18582460). Interacts (via extracellular domain) with FLRT3 (via extracellular domain); the interaction is direct. Interacts (via extracellular domain) with FLRT2 and FLRT3 (via extracellular domain), but has higher affinity for FLRT3. Identified in a complex with FLRT3 and ADGRL3; does not interact with ADGRL3 by itself (By similarity).</text>
</comment>
<comment type="interaction">
    <interactant intactId="EBI-4404185">
        <id>O08722</id>
    </interactant>
    <interactant intactId="EBI-4409108">
        <id>Q8CGU4</id>
        <label>Agap2</label>
    </interactant>
    <organismsDiffer>false</organismsDiffer>
    <experiments>6</experiments>
</comment>
<comment type="interaction">
    <interactant intactId="EBI-4404185">
        <id>O08722</id>
    </interactant>
    <interactant intactId="EBI-357094">
        <id>P30154</id>
        <label>PPP2R1B</label>
    </interactant>
    <organismsDiffer>true</organismsDiffer>
    <experiments>4</experiments>
</comment>
<comment type="subcellular location">
    <subcellularLocation>
        <location evidence="14">Cell membrane</location>
        <topology evidence="14">Single-pass type I membrane protein</topology>
    </subcellularLocation>
    <subcellularLocation>
        <location evidence="13">Membrane raft</location>
    </subcellularLocation>
    <text evidence="13">Associated with lipid rafts (PubMed:18582460).</text>
</comment>
<comment type="tissue specificity">
    <text evidence="14">Mainly expressed in regions of differentiating neurons. Expressed in the developing sensory ganglia that flank the spinal cord from E12, peaking at E14. Expressed in the roof plate region of the spinal cord from E14.</text>
</comment>
<comment type="PTM">
    <text evidence="1">Phosphorylated on cytoplasmic tyrosine residues.</text>
</comment>
<comment type="PTM">
    <text evidence="11">Proteolytically cleaved by caspases during apoptosis. The cleavage does not take place when the receptor is associated with netrin ligand. Its cleavage by caspases is required to induce apoptosis.</text>
</comment>
<comment type="PTM">
    <text evidence="13">Palmitoylation is required for pro-apoptotic activity, but not for location at lipid rafts.</text>
</comment>
<comment type="similarity">
    <text evidence="15">Belongs to the unc-5 family.</text>
</comment>
<sequence>MRARSGARGALLLALLLCWDPTPSLAGIDSGGQALPDSFPSAPAEQLPHFLLEPEDAYIVKNKPVELHCRAFPATQIYFKCNGEWVSQKGHVTQESLDEATGLRIREVQIEVSRQQVEELFGLEDYWCQCVAWSSSGTTKSRRAYIRIAYLRKNFDQEPLAKEVPLDHEVLLQCRPPEGVPVAEVEWLKNEDVIDPAQDTNFLLTIDHNLIIRQARLSDTANYTCVAKNIVAKRRSTTATVIVYVNGGWSSWAEWSPCSNRCGRGWQKRTRTCTNPAPLNGGAFCEGQACQKTACTTVCPVDGAWTEWSKWSACSTECAHWRSRECMAPPPQNGGRDCSGTLLDSKNCTDGLCVLNQRTLNDPKSRPLEPSGDVALYAGLVVAVFVVLAVLMAVGVIVYRRNCRDFDTDITDSSAALTGGFHPVNFKTARPSNPQLLHPSAPPDLTASAGIYRGPVYALQDSADKIPMTNSPLLDPLPSLKIKVYDSSTIGSGAGLADGADLLGVLPPGTYPGDFSRDTHFLHLRSASLGSQHLLGLPRDPSSSVSGTFGCLGGRLTIPGTGVSLLVPNGAIPQGKFYDLYLRINKTESTLPLSEGSQTVLSPSVTCGPTGLLLCRPVVLTVPHCAEVIAGDWIFQLKTQAHQGHWEEVVTLDEETLNTPCYCQLEAKSCHILLDQLGTYVFTGESYSRSAVKRLQLAIFAPALCTSLEYSLRVYCLEDTPAALKEVLELERTLGGYLVEEPKTLLFKDSYHNLRLSLHDIPHAHWRSKLLAKYQEIPFYHVWNGSQKALHCTFTLERHSLASTEFTCKVCVRQVEGEGQIFQLHTTLAETPAGSLDALCSAPGNAATTQLGPYAFKIPLSIRQKICNSLDAPNSRGNDWRLLAQKLSMDRYLNYFATKASPTGVILDLWEARQQDDGDLNSLASALEEMGKSEMLVAMTTDGDC</sequence>
<dbReference type="EMBL" id="U87306">
    <property type="protein sequence ID" value="AAB57679.1"/>
    <property type="molecule type" value="mRNA"/>
</dbReference>
<dbReference type="RefSeq" id="NP_071543.1">
    <property type="nucleotide sequence ID" value="NM_022207.1"/>
</dbReference>
<dbReference type="PDB" id="3G5B">
    <property type="method" value="X-ray"/>
    <property type="resolution" value="2.00 A"/>
    <property type="chains" value="A=541-945"/>
</dbReference>
<dbReference type="PDBsum" id="3G5B"/>
<dbReference type="SMR" id="O08722"/>
<dbReference type="DIP" id="DIP-60743N"/>
<dbReference type="FunCoup" id="O08722">
    <property type="interactions" value="671"/>
</dbReference>
<dbReference type="IntAct" id="O08722">
    <property type="interactions" value="5"/>
</dbReference>
<dbReference type="STRING" id="10116.ENSRNOP00000034951"/>
<dbReference type="GlyCosmos" id="O08722">
    <property type="glycosylation" value="2 sites, No reported glycans"/>
</dbReference>
<dbReference type="GlyGen" id="O08722">
    <property type="glycosylation" value="3 sites"/>
</dbReference>
<dbReference type="iPTMnet" id="O08722"/>
<dbReference type="PhosphoSitePlus" id="O08722"/>
<dbReference type="SwissPalm" id="O08722"/>
<dbReference type="jPOST" id="O08722"/>
<dbReference type="PaxDb" id="10116-ENSRNOP00000034951"/>
<dbReference type="GeneID" id="60630"/>
<dbReference type="KEGG" id="rno:60630"/>
<dbReference type="UCSC" id="RGD:621756">
    <property type="organism name" value="rat"/>
</dbReference>
<dbReference type="AGR" id="RGD:621756"/>
<dbReference type="CTD" id="219699"/>
<dbReference type="RGD" id="621756">
    <property type="gene designation" value="Unc5b"/>
</dbReference>
<dbReference type="eggNOG" id="KOG1480">
    <property type="taxonomic scope" value="Eukaryota"/>
</dbReference>
<dbReference type="InParanoid" id="O08722"/>
<dbReference type="PhylomeDB" id="O08722"/>
<dbReference type="EvolutionaryTrace" id="O08722"/>
<dbReference type="PRO" id="PR:O08722"/>
<dbReference type="Proteomes" id="UP000002494">
    <property type="component" value="Unplaced"/>
</dbReference>
<dbReference type="GO" id="GO:0045121">
    <property type="term" value="C:membrane raft"/>
    <property type="evidence" value="ECO:0000314"/>
    <property type="project" value="UniProtKB"/>
</dbReference>
<dbReference type="GO" id="GO:0005886">
    <property type="term" value="C:plasma membrane"/>
    <property type="evidence" value="ECO:0000304"/>
    <property type="project" value="Reactome"/>
</dbReference>
<dbReference type="GO" id="GO:0005042">
    <property type="term" value="F:netrin receptor activity"/>
    <property type="evidence" value="ECO:0000314"/>
    <property type="project" value="RGD"/>
</dbReference>
<dbReference type="GO" id="GO:0033564">
    <property type="term" value="P:anterior/posterior axon guidance"/>
    <property type="evidence" value="ECO:0000266"/>
    <property type="project" value="RGD"/>
</dbReference>
<dbReference type="GO" id="GO:0006915">
    <property type="term" value="P:apoptotic process"/>
    <property type="evidence" value="ECO:0007669"/>
    <property type="project" value="UniProtKB-KW"/>
</dbReference>
<dbReference type="GO" id="GO:0007411">
    <property type="term" value="P:axon guidance"/>
    <property type="evidence" value="ECO:0000314"/>
    <property type="project" value="RGD"/>
</dbReference>
<dbReference type="GO" id="GO:2001240">
    <property type="term" value="P:negative regulation of extrinsic apoptotic signaling pathway in absence of ligand"/>
    <property type="evidence" value="ECO:0000266"/>
    <property type="project" value="RGD"/>
</dbReference>
<dbReference type="GO" id="GO:0043524">
    <property type="term" value="P:negative regulation of neuron apoptotic process"/>
    <property type="evidence" value="ECO:0000266"/>
    <property type="project" value="RGD"/>
</dbReference>
<dbReference type="GO" id="GO:2001241">
    <property type="term" value="P:positive regulation of extrinsic apoptotic signaling pathway in absence of ligand"/>
    <property type="evidence" value="ECO:0000315"/>
    <property type="project" value="UniProtKB"/>
</dbReference>
<dbReference type="GO" id="GO:0051897">
    <property type="term" value="P:positive regulation of phosphatidylinositol 3-kinase/protein kinase B signal transduction"/>
    <property type="evidence" value="ECO:0000266"/>
    <property type="project" value="RGD"/>
</dbReference>
<dbReference type="CDD" id="cd08802">
    <property type="entry name" value="Death_UNC5B"/>
    <property type="match status" value="1"/>
</dbReference>
<dbReference type="FunFam" id="1.10.533.10:FF:000001">
    <property type="entry name" value="Unc-5 netrin receptor B"/>
    <property type="match status" value="1"/>
</dbReference>
<dbReference type="FunFam" id="2.20.100.10:FF:000002">
    <property type="entry name" value="Unc-5 netrin receptor C"/>
    <property type="match status" value="1"/>
</dbReference>
<dbReference type="FunFam" id="2.20.100.10:FF:000008">
    <property type="entry name" value="Unc-5 netrin receptor C"/>
    <property type="match status" value="1"/>
</dbReference>
<dbReference type="FunFam" id="2.60.220.30:FF:000003">
    <property type="entry name" value="Unc-5 netrin receptor C"/>
    <property type="match status" value="1"/>
</dbReference>
<dbReference type="FunFam" id="2.60.40.10:FF:000037">
    <property type="entry name" value="Unc-5 netrin receptor C"/>
    <property type="match status" value="1"/>
</dbReference>
<dbReference type="FunFam" id="2.60.40.10:FF:000039">
    <property type="entry name" value="Unc-5 netrin receptor C"/>
    <property type="match status" value="1"/>
</dbReference>
<dbReference type="Gene3D" id="2.60.220.30">
    <property type="match status" value="1"/>
</dbReference>
<dbReference type="Gene3D" id="1.10.533.10">
    <property type="entry name" value="Death Domain, Fas"/>
    <property type="match status" value="1"/>
</dbReference>
<dbReference type="Gene3D" id="2.60.40.10">
    <property type="entry name" value="Immunoglobulins"/>
    <property type="match status" value="2"/>
</dbReference>
<dbReference type="Gene3D" id="2.20.100.10">
    <property type="entry name" value="Thrombospondin type-1 (TSP1) repeat"/>
    <property type="match status" value="2"/>
</dbReference>
<dbReference type="InterPro" id="IPR011029">
    <property type="entry name" value="DEATH-like_dom_sf"/>
</dbReference>
<dbReference type="InterPro" id="IPR000488">
    <property type="entry name" value="Death_dom"/>
</dbReference>
<dbReference type="InterPro" id="IPR042156">
    <property type="entry name" value="Death_UNC5B"/>
</dbReference>
<dbReference type="InterPro" id="IPR007110">
    <property type="entry name" value="Ig-like_dom"/>
</dbReference>
<dbReference type="InterPro" id="IPR036179">
    <property type="entry name" value="Ig-like_dom_sf"/>
</dbReference>
<dbReference type="InterPro" id="IPR013783">
    <property type="entry name" value="Ig-like_fold"/>
</dbReference>
<dbReference type="InterPro" id="IPR013098">
    <property type="entry name" value="Ig_I-set"/>
</dbReference>
<dbReference type="InterPro" id="IPR003599">
    <property type="entry name" value="Ig_sub"/>
</dbReference>
<dbReference type="InterPro" id="IPR003598">
    <property type="entry name" value="Ig_sub2"/>
</dbReference>
<dbReference type="InterPro" id="IPR000884">
    <property type="entry name" value="TSP1_rpt"/>
</dbReference>
<dbReference type="InterPro" id="IPR036383">
    <property type="entry name" value="TSP1_rpt_sf"/>
</dbReference>
<dbReference type="InterPro" id="IPR037936">
    <property type="entry name" value="UNC5"/>
</dbReference>
<dbReference type="InterPro" id="IPR033772">
    <property type="entry name" value="UPA"/>
</dbReference>
<dbReference type="InterPro" id="IPR000906">
    <property type="entry name" value="ZU5_dom"/>
</dbReference>
<dbReference type="PANTHER" id="PTHR12582">
    <property type="entry name" value="NETRIN RECEPTOR UNC5"/>
    <property type="match status" value="1"/>
</dbReference>
<dbReference type="PANTHER" id="PTHR12582:SF6">
    <property type="entry name" value="NETRIN RECEPTOR UNC5B"/>
    <property type="match status" value="1"/>
</dbReference>
<dbReference type="Pfam" id="PF00531">
    <property type="entry name" value="Death"/>
    <property type="match status" value="1"/>
</dbReference>
<dbReference type="Pfam" id="PF07679">
    <property type="entry name" value="I-set"/>
    <property type="match status" value="1"/>
</dbReference>
<dbReference type="Pfam" id="PF00090">
    <property type="entry name" value="TSP_1"/>
    <property type="match status" value="2"/>
</dbReference>
<dbReference type="Pfam" id="PF17217">
    <property type="entry name" value="UPA"/>
    <property type="match status" value="1"/>
</dbReference>
<dbReference type="Pfam" id="PF00791">
    <property type="entry name" value="ZU5"/>
    <property type="match status" value="1"/>
</dbReference>
<dbReference type="PRINTS" id="PR01705">
    <property type="entry name" value="TSP1REPEAT"/>
</dbReference>
<dbReference type="SMART" id="SM00005">
    <property type="entry name" value="DEATH"/>
    <property type="match status" value="1"/>
</dbReference>
<dbReference type="SMART" id="SM00409">
    <property type="entry name" value="IG"/>
    <property type="match status" value="2"/>
</dbReference>
<dbReference type="SMART" id="SM00408">
    <property type="entry name" value="IGc2"/>
    <property type="match status" value="1"/>
</dbReference>
<dbReference type="SMART" id="SM00209">
    <property type="entry name" value="TSP1"/>
    <property type="match status" value="2"/>
</dbReference>
<dbReference type="SMART" id="SM00218">
    <property type="entry name" value="ZU5"/>
    <property type="match status" value="1"/>
</dbReference>
<dbReference type="SUPFAM" id="SSF47986">
    <property type="entry name" value="DEATH domain"/>
    <property type="match status" value="1"/>
</dbReference>
<dbReference type="SUPFAM" id="SSF48726">
    <property type="entry name" value="Immunoglobulin"/>
    <property type="match status" value="2"/>
</dbReference>
<dbReference type="SUPFAM" id="SSF82895">
    <property type="entry name" value="TSP-1 type 1 repeat"/>
    <property type="match status" value="2"/>
</dbReference>
<dbReference type="PROSITE" id="PS50017">
    <property type="entry name" value="DEATH_DOMAIN"/>
    <property type="match status" value="1"/>
</dbReference>
<dbReference type="PROSITE" id="PS50835">
    <property type="entry name" value="IG_LIKE"/>
    <property type="match status" value="1"/>
</dbReference>
<dbReference type="PROSITE" id="PS50092">
    <property type="entry name" value="TSP1"/>
    <property type="match status" value="2"/>
</dbReference>
<dbReference type="PROSITE" id="PS51145">
    <property type="entry name" value="ZU5"/>
    <property type="match status" value="1"/>
</dbReference>